<sequence length="196" mass="21836">MQLKRVAEAKLPTPWGDFLMVGFEELATGHDHVALVYGDISGHTPVLARVHSECLTGDALFSLRCDCGFQLEAALTQIAEEGRGILLYHRQEGRNIGLLNKIRAYALQDQGYDTVEANHQLGFAADERDFTLCADMFKLLGVNEVRLLTNNPKKVEILTEAGINIVERVPLIVGRNPNNEHYLDTKAEKMGHLLNK</sequence>
<dbReference type="EC" id="3.5.4.25" evidence="1"/>
<dbReference type="EMBL" id="CU928163">
    <property type="protein sequence ID" value="CAR12786.1"/>
    <property type="molecule type" value="Genomic_DNA"/>
</dbReference>
<dbReference type="RefSeq" id="WP_001176295.1">
    <property type="nucleotide sequence ID" value="NC_011751.1"/>
</dbReference>
<dbReference type="RefSeq" id="YP_002412323.1">
    <property type="nucleotide sequence ID" value="NC_011751.1"/>
</dbReference>
<dbReference type="SMR" id="B7N493"/>
<dbReference type="STRING" id="585056.ECUMN_1579"/>
<dbReference type="GeneID" id="86946614"/>
<dbReference type="KEGG" id="eum:ECUMN_1579"/>
<dbReference type="PATRIC" id="fig|585056.7.peg.1773"/>
<dbReference type="HOGENOM" id="CLU_020273_2_1_6"/>
<dbReference type="UniPathway" id="UPA00275">
    <property type="reaction ID" value="UER00400"/>
</dbReference>
<dbReference type="Proteomes" id="UP000007097">
    <property type="component" value="Chromosome"/>
</dbReference>
<dbReference type="GO" id="GO:0005829">
    <property type="term" value="C:cytosol"/>
    <property type="evidence" value="ECO:0007669"/>
    <property type="project" value="TreeGrafter"/>
</dbReference>
<dbReference type="GO" id="GO:0005525">
    <property type="term" value="F:GTP binding"/>
    <property type="evidence" value="ECO:0007669"/>
    <property type="project" value="UniProtKB-KW"/>
</dbReference>
<dbReference type="GO" id="GO:0003935">
    <property type="term" value="F:GTP cyclohydrolase II activity"/>
    <property type="evidence" value="ECO:0007669"/>
    <property type="project" value="UniProtKB-UniRule"/>
</dbReference>
<dbReference type="GO" id="GO:0008270">
    <property type="term" value="F:zinc ion binding"/>
    <property type="evidence" value="ECO:0007669"/>
    <property type="project" value="UniProtKB-UniRule"/>
</dbReference>
<dbReference type="GO" id="GO:0009231">
    <property type="term" value="P:riboflavin biosynthetic process"/>
    <property type="evidence" value="ECO:0007669"/>
    <property type="project" value="UniProtKB-UniRule"/>
</dbReference>
<dbReference type="CDD" id="cd00641">
    <property type="entry name" value="GTP_cyclohydro2"/>
    <property type="match status" value="1"/>
</dbReference>
<dbReference type="FunFam" id="3.40.50.10990:FF:000002">
    <property type="entry name" value="GTP cyclohydrolase-2"/>
    <property type="match status" value="1"/>
</dbReference>
<dbReference type="Gene3D" id="3.40.50.10990">
    <property type="entry name" value="GTP cyclohydrolase II"/>
    <property type="match status" value="1"/>
</dbReference>
<dbReference type="HAMAP" id="MF_00179">
    <property type="entry name" value="RibA"/>
    <property type="match status" value="1"/>
</dbReference>
<dbReference type="InterPro" id="IPR032677">
    <property type="entry name" value="GTP_cyclohydro_II"/>
</dbReference>
<dbReference type="InterPro" id="IPR000926">
    <property type="entry name" value="RibA"/>
</dbReference>
<dbReference type="InterPro" id="IPR036144">
    <property type="entry name" value="RibA-like_sf"/>
</dbReference>
<dbReference type="NCBIfam" id="NF001591">
    <property type="entry name" value="PRK00393.1"/>
    <property type="match status" value="1"/>
</dbReference>
<dbReference type="NCBIfam" id="TIGR00505">
    <property type="entry name" value="ribA"/>
    <property type="match status" value="1"/>
</dbReference>
<dbReference type="PANTHER" id="PTHR21327:SF18">
    <property type="entry name" value="3,4-DIHYDROXY-2-BUTANONE 4-PHOSPHATE SYNTHASE"/>
    <property type="match status" value="1"/>
</dbReference>
<dbReference type="PANTHER" id="PTHR21327">
    <property type="entry name" value="GTP CYCLOHYDROLASE II-RELATED"/>
    <property type="match status" value="1"/>
</dbReference>
<dbReference type="Pfam" id="PF00925">
    <property type="entry name" value="GTP_cyclohydro2"/>
    <property type="match status" value="1"/>
</dbReference>
<dbReference type="SUPFAM" id="SSF142695">
    <property type="entry name" value="RibA-like"/>
    <property type="match status" value="1"/>
</dbReference>
<evidence type="ECO:0000255" key="1">
    <source>
        <dbReference type="HAMAP-Rule" id="MF_00179"/>
    </source>
</evidence>
<reference key="1">
    <citation type="journal article" date="2009" name="PLoS Genet.">
        <title>Organised genome dynamics in the Escherichia coli species results in highly diverse adaptive paths.</title>
        <authorList>
            <person name="Touchon M."/>
            <person name="Hoede C."/>
            <person name="Tenaillon O."/>
            <person name="Barbe V."/>
            <person name="Baeriswyl S."/>
            <person name="Bidet P."/>
            <person name="Bingen E."/>
            <person name="Bonacorsi S."/>
            <person name="Bouchier C."/>
            <person name="Bouvet O."/>
            <person name="Calteau A."/>
            <person name="Chiapello H."/>
            <person name="Clermont O."/>
            <person name="Cruveiller S."/>
            <person name="Danchin A."/>
            <person name="Diard M."/>
            <person name="Dossat C."/>
            <person name="Karoui M.E."/>
            <person name="Frapy E."/>
            <person name="Garry L."/>
            <person name="Ghigo J.M."/>
            <person name="Gilles A.M."/>
            <person name="Johnson J."/>
            <person name="Le Bouguenec C."/>
            <person name="Lescat M."/>
            <person name="Mangenot S."/>
            <person name="Martinez-Jehanne V."/>
            <person name="Matic I."/>
            <person name="Nassif X."/>
            <person name="Oztas S."/>
            <person name="Petit M.A."/>
            <person name="Pichon C."/>
            <person name="Rouy Z."/>
            <person name="Ruf C.S."/>
            <person name="Schneider D."/>
            <person name="Tourret J."/>
            <person name="Vacherie B."/>
            <person name="Vallenet D."/>
            <person name="Medigue C."/>
            <person name="Rocha E.P.C."/>
            <person name="Denamur E."/>
        </authorList>
    </citation>
    <scope>NUCLEOTIDE SEQUENCE [LARGE SCALE GENOMIC DNA]</scope>
    <source>
        <strain>UMN026 / ExPEC</strain>
    </source>
</reference>
<organism>
    <name type="scientific">Escherichia coli O17:K52:H18 (strain UMN026 / ExPEC)</name>
    <dbReference type="NCBI Taxonomy" id="585056"/>
    <lineage>
        <taxon>Bacteria</taxon>
        <taxon>Pseudomonadati</taxon>
        <taxon>Pseudomonadota</taxon>
        <taxon>Gammaproteobacteria</taxon>
        <taxon>Enterobacterales</taxon>
        <taxon>Enterobacteriaceae</taxon>
        <taxon>Escherichia</taxon>
    </lineage>
</organism>
<comment type="function">
    <text evidence="1">Catalyzes the conversion of GTP to 2,5-diamino-6-ribosylamino-4(3H)-pyrimidinone 5'-phosphate (DARP), formate and pyrophosphate.</text>
</comment>
<comment type="catalytic activity">
    <reaction evidence="1">
        <text>GTP + 4 H2O = 2,5-diamino-6-hydroxy-4-(5-phosphoribosylamino)-pyrimidine + formate + 2 phosphate + 3 H(+)</text>
        <dbReference type="Rhea" id="RHEA:23704"/>
        <dbReference type="ChEBI" id="CHEBI:15377"/>
        <dbReference type="ChEBI" id="CHEBI:15378"/>
        <dbReference type="ChEBI" id="CHEBI:15740"/>
        <dbReference type="ChEBI" id="CHEBI:37565"/>
        <dbReference type="ChEBI" id="CHEBI:43474"/>
        <dbReference type="ChEBI" id="CHEBI:58614"/>
        <dbReference type="EC" id="3.5.4.25"/>
    </reaction>
</comment>
<comment type="cofactor">
    <cofactor evidence="1">
        <name>Zn(2+)</name>
        <dbReference type="ChEBI" id="CHEBI:29105"/>
    </cofactor>
    <text evidence="1">Binds 1 zinc ion per subunit.</text>
</comment>
<comment type="pathway">
    <text evidence="1">Cofactor biosynthesis; riboflavin biosynthesis; 5-amino-6-(D-ribitylamino)uracil from GTP: step 1/4.</text>
</comment>
<comment type="subunit">
    <text evidence="1">Homodimer.</text>
</comment>
<comment type="similarity">
    <text evidence="1">Belongs to the GTP cyclohydrolase II family.</text>
</comment>
<protein>
    <recommendedName>
        <fullName evidence="1">GTP cyclohydrolase-2</fullName>
        <ecNumber evidence="1">3.5.4.25</ecNumber>
    </recommendedName>
    <alternativeName>
        <fullName evidence="1">GTP cyclohydrolase II</fullName>
    </alternativeName>
</protein>
<proteinExistence type="inferred from homology"/>
<accession>B7N493</accession>
<gene>
    <name evidence="1" type="primary">ribA</name>
    <name type="ordered locus">ECUMN_1579</name>
</gene>
<name>RIBA_ECOLU</name>
<keyword id="KW-0342">GTP-binding</keyword>
<keyword id="KW-0378">Hydrolase</keyword>
<keyword id="KW-0479">Metal-binding</keyword>
<keyword id="KW-0547">Nucleotide-binding</keyword>
<keyword id="KW-0686">Riboflavin biosynthesis</keyword>
<keyword id="KW-0862">Zinc</keyword>
<feature type="chain" id="PRO_1000118429" description="GTP cyclohydrolase-2">
    <location>
        <begin position="1"/>
        <end position="196"/>
    </location>
</feature>
<feature type="active site" description="Proton acceptor" evidence="1">
    <location>
        <position position="126"/>
    </location>
</feature>
<feature type="active site" description="Nucleophile" evidence="1">
    <location>
        <position position="128"/>
    </location>
</feature>
<feature type="binding site" evidence="1">
    <location>
        <begin position="49"/>
        <end position="53"/>
    </location>
    <ligand>
        <name>GTP</name>
        <dbReference type="ChEBI" id="CHEBI:37565"/>
    </ligand>
</feature>
<feature type="binding site" evidence="1">
    <location>
        <position position="54"/>
    </location>
    <ligand>
        <name>Zn(2+)</name>
        <dbReference type="ChEBI" id="CHEBI:29105"/>
        <note>catalytic</note>
    </ligand>
</feature>
<feature type="binding site" evidence="1">
    <location>
        <position position="65"/>
    </location>
    <ligand>
        <name>Zn(2+)</name>
        <dbReference type="ChEBI" id="CHEBI:29105"/>
        <note>catalytic</note>
    </ligand>
</feature>
<feature type="binding site" evidence="1">
    <location>
        <position position="67"/>
    </location>
    <ligand>
        <name>Zn(2+)</name>
        <dbReference type="ChEBI" id="CHEBI:29105"/>
        <note>catalytic</note>
    </ligand>
</feature>
<feature type="binding site" evidence="1">
    <location>
        <position position="70"/>
    </location>
    <ligand>
        <name>GTP</name>
        <dbReference type="ChEBI" id="CHEBI:37565"/>
    </ligand>
</feature>
<feature type="binding site" evidence="1">
    <location>
        <begin position="92"/>
        <end position="94"/>
    </location>
    <ligand>
        <name>GTP</name>
        <dbReference type="ChEBI" id="CHEBI:37565"/>
    </ligand>
</feature>
<feature type="binding site" evidence="1">
    <location>
        <position position="114"/>
    </location>
    <ligand>
        <name>GTP</name>
        <dbReference type="ChEBI" id="CHEBI:37565"/>
    </ligand>
</feature>
<feature type="binding site" evidence="1">
    <location>
        <position position="149"/>
    </location>
    <ligand>
        <name>GTP</name>
        <dbReference type="ChEBI" id="CHEBI:37565"/>
    </ligand>
</feature>
<feature type="binding site" evidence="1">
    <location>
        <position position="154"/>
    </location>
    <ligand>
        <name>GTP</name>
        <dbReference type="ChEBI" id="CHEBI:37565"/>
    </ligand>
</feature>